<name>YIDC_PECAS</name>
<keyword id="KW-0997">Cell inner membrane</keyword>
<keyword id="KW-1003">Cell membrane</keyword>
<keyword id="KW-0143">Chaperone</keyword>
<keyword id="KW-0472">Membrane</keyword>
<keyword id="KW-0653">Protein transport</keyword>
<keyword id="KW-1185">Reference proteome</keyword>
<keyword id="KW-0812">Transmembrane</keyword>
<keyword id="KW-1133">Transmembrane helix</keyword>
<keyword id="KW-0813">Transport</keyword>
<comment type="function">
    <text evidence="1">Required for the insertion and/or proper folding and/or complex formation of integral membrane proteins into the membrane. Involved in integration of membrane proteins that insert both dependently and independently of the Sec translocase complex, as well as at least some lipoproteins. Aids folding of multispanning membrane proteins.</text>
</comment>
<comment type="subunit">
    <text evidence="1">Interacts with the Sec translocase complex via SecD. Specifically interacts with transmembrane segments of nascent integral membrane proteins during membrane integration.</text>
</comment>
<comment type="subcellular location">
    <subcellularLocation>
        <location evidence="1">Cell inner membrane</location>
        <topology evidence="1">Multi-pass membrane protein</topology>
    </subcellularLocation>
</comment>
<comment type="similarity">
    <text evidence="1">Belongs to the OXA1/ALB3/YidC family. Type 1 subfamily.</text>
</comment>
<accession>Q6CYR0</accession>
<proteinExistence type="inferred from homology"/>
<feature type="chain" id="PRO_1000070092" description="Membrane protein insertase YidC">
    <location>
        <begin position="1"/>
        <end position="544"/>
    </location>
</feature>
<feature type="transmembrane region" description="Helical" evidence="1">
    <location>
        <begin position="6"/>
        <end position="26"/>
    </location>
</feature>
<feature type="transmembrane region" description="Helical" evidence="1">
    <location>
        <begin position="343"/>
        <end position="363"/>
    </location>
</feature>
<feature type="transmembrane region" description="Helical" evidence="1">
    <location>
        <begin position="418"/>
        <end position="438"/>
    </location>
</feature>
<feature type="transmembrane region" description="Helical" evidence="1">
    <location>
        <begin position="456"/>
        <end position="476"/>
    </location>
</feature>
<feature type="transmembrane region" description="Helical" evidence="1">
    <location>
        <begin position="497"/>
        <end position="517"/>
    </location>
</feature>
<reference key="1">
    <citation type="journal article" date="2004" name="Proc. Natl. Acad. Sci. U.S.A.">
        <title>Genome sequence of the enterobacterial phytopathogen Erwinia carotovora subsp. atroseptica and characterization of virulence factors.</title>
        <authorList>
            <person name="Bell K.S."/>
            <person name="Sebaihia M."/>
            <person name="Pritchard L."/>
            <person name="Holden M.T.G."/>
            <person name="Hyman L.J."/>
            <person name="Holeva M.C."/>
            <person name="Thomson N.R."/>
            <person name="Bentley S.D."/>
            <person name="Churcher L.J.C."/>
            <person name="Mungall K."/>
            <person name="Atkin R."/>
            <person name="Bason N."/>
            <person name="Brooks K."/>
            <person name="Chillingworth T."/>
            <person name="Clark K."/>
            <person name="Doggett J."/>
            <person name="Fraser A."/>
            <person name="Hance Z."/>
            <person name="Hauser H."/>
            <person name="Jagels K."/>
            <person name="Moule S."/>
            <person name="Norbertczak H."/>
            <person name="Ormond D."/>
            <person name="Price C."/>
            <person name="Quail M.A."/>
            <person name="Sanders M."/>
            <person name="Walker D."/>
            <person name="Whitehead S."/>
            <person name="Salmond G.P.C."/>
            <person name="Birch P.R.J."/>
            <person name="Parkhill J."/>
            <person name="Toth I.K."/>
        </authorList>
    </citation>
    <scope>NUCLEOTIDE SEQUENCE [LARGE SCALE GENOMIC DNA]</scope>
    <source>
        <strain>SCRI 1043 / ATCC BAA-672</strain>
    </source>
</reference>
<sequence length="544" mass="60757">MDSQRNLLLIALLFVTFMLWQAWETDKNPPATTQTIQQATNAVTGDATNQGVPASGQGKLITVKTDVLSLTINTRGGDVEQAHLLAYPDILGSDKPFHLLETTSAFVYQAQSGLTGKNGPDNPANGSRPLFVTTQDSFELADGQSELRIPMTYTAADGVTYTKTFVLKRGDYALNVDYSVNNTSAQPLELTLFGQLKQSIDLPKHRDTGSNNFALHTYRGAAFSSSEDKYKKYSFSDMDEGLNITTNSGWVAMLQQYFATAWIPTTAGANTFYTSKLGNGQAAIGFKAAPVIIAAGSQQNLNATLWVGPEIQDKMAAVAPHLDLTVDYGWLWFISQPLFKLLKFLHGFIGNWGFSIIAITFIVRGVMYPLTKAQYTSMAKMRLLQPKLQAMRERIGDDKQRMSQEMMALYKSEKVNPLGGCLPLVIQMPIFLALYYMLMGSVELRHAPFALWIHDLSAQDPYYILPILMGVTMFFIQKMSPTTVTDPMQQKIMTYMPVIFTVFFLWFPSGLVMYYIVSNLVTILQQQLIYRGLEKRGLHSREKK</sequence>
<protein>
    <recommendedName>
        <fullName evidence="1">Membrane protein insertase YidC</fullName>
    </recommendedName>
    <alternativeName>
        <fullName evidence="1">Foldase YidC</fullName>
    </alternativeName>
    <alternativeName>
        <fullName evidence="1">Membrane integrase YidC</fullName>
    </alternativeName>
    <alternativeName>
        <fullName evidence="1">Membrane protein YidC</fullName>
    </alternativeName>
</protein>
<gene>
    <name evidence="1" type="primary">yidC</name>
    <name type="ordered locus">ECA4445</name>
</gene>
<dbReference type="EMBL" id="BX950851">
    <property type="protein sequence ID" value="CAG77341.1"/>
    <property type="molecule type" value="Genomic_DNA"/>
</dbReference>
<dbReference type="RefSeq" id="WP_011095903.1">
    <property type="nucleotide sequence ID" value="NC_004547.2"/>
</dbReference>
<dbReference type="SMR" id="Q6CYR0"/>
<dbReference type="STRING" id="218491.ECA4445"/>
<dbReference type="GeneID" id="57211136"/>
<dbReference type="KEGG" id="eca:ECA4445"/>
<dbReference type="PATRIC" id="fig|218491.5.peg.4534"/>
<dbReference type="eggNOG" id="COG0706">
    <property type="taxonomic scope" value="Bacteria"/>
</dbReference>
<dbReference type="HOGENOM" id="CLU_016535_3_0_6"/>
<dbReference type="OrthoDB" id="9780552at2"/>
<dbReference type="Proteomes" id="UP000007966">
    <property type="component" value="Chromosome"/>
</dbReference>
<dbReference type="GO" id="GO:0005886">
    <property type="term" value="C:plasma membrane"/>
    <property type="evidence" value="ECO:0007669"/>
    <property type="project" value="UniProtKB-SubCell"/>
</dbReference>
<dbReference type="GO" id="GO:0032977">
    <property type="term" value="F:membrane insertase activity"/>
    <property type="evidence" value="ECO:0007669"/>
    <property type="project" value="InterPro"/>
</dbReference>
<dbReference type="GO" id="GO:0051205">
    <property type="term" value="P:protein insertion into membrane"/>
    <property type="evidence" value="ECO:0007669"/>
    <property type="project" value="TreeGrafter"/>
</dbReference>
<dbReference type="GO" id="GO:0015031">
    <property type="term" value="P:protein transport"/>
    <property type="evidence" value="ECO:0007669"/>
    <property type="project" value="UniProtKB-KW"/>
</dbReference>
<dbReference type="CDD" id="cd20070">
    <property type="entry name" value="5TM_YidC_Alb3"/>
    <property type="match status" value="1"/>
</dbReference>
<dbReference type="CDD" id="cd19961">
    <property type="entry name" value="EcYidC-like_peri"/>
    <property type="match status" value="1"/>
</dbReference>
<dbReference type="FunFam" id="2.70.98.90:FF:000001">
    <property type="entry name" value="Membrane protein insertase YidC"/>
    <property type="match status" value="1"/>
</dbReference>
<dbReference type="Gene3D" id="2.70.98.90">
    <property type="match status" value="1"/>
</dbReference>
<dbReference type="HAMAP" id="MF_01810">
    <property type="entry name" value="YidC_type1"/>
    <property type="match status" value="1"/>
</dbReference>
<dbReference type="InterPro" id="IPR019998">
    <property type="entry name" value="Membr_insert_YidC"/>
</dbReference>
<dbReference type="InterPro" id="IPR028053">
    <property type="entry name" value="Membr_insert_YidC_N"/>
</dbReference>
<dbReference type="InterPro" id="IPR001708">
    <property type="entry name" value="YidC/ALB3/OXA1/COX18"/>
</dbReference>
<dbReference type="InterPro" id="IPR028055">
    <property type="entry name" value="YidC/Oxa/ALB_C"/>
</dbReference>
<dbReference type="InterPro" id="IPR047196">
    <property type="entry name" value="YidC_ALB_C"/>
</dbReference>
<dbReference type="InterPro" id="IPR038221">
    <property type="entry name" value="YidC_periplasmic_sf"/>
</dbReference>
<dbReference type="NCBIfam" id="NF002351">
    <property type="entry name" value="PRK01318.1-1"/>
    <property type="match status" value="1"/>
</dbReference>
<dbReference type="NCBIfam" id="NF002352">
    <property type="entry name" value="PRK01318.1-3"/>
    <property type="match status" value="1"/>
</dbReference>
<dbReference type="NCBIfam" id="TIGR03593">
    <property type="entry name" value="yidC_nterm"/>
    <property type="match status" value="1"/>
</dbReference>
<dbReference type="NCBIfam" id="TIGR03592">
    <property type="entry name" value="yidC_oxa1_cterm"/>
    <property type="match status" value="1"/>
</dbReference>
<dbReference type="PANTHER" id="PTHR12428:SF65">
    <property type="entry name" value="CYTOCHROME C OXIDASE ASSEMBLY PROTEIN COX18, MITOCHONDRIAL"/>
    <property type="match status" value="1"/>
</dbReference>
<dbReference type="PANTHER" id="PTHR12428">
    <property type="entry name" value="OXA1"/>
    <property type="match status" value="1"/>
</dbReference>
<dbReference type="Pfam" id="PF02096">
    <property type="entry name" value="60KD_IMP"/>
    <property type="match status" value="1"/>
</dbReference>
<dbReference type="Pfam" id="PF14849">
    <property type="entry name" value="YidC_periplas"/>
    <property type="match status" value="1"/>
</dbReference>
<dbReference type="PRINTS" id="PR00701">
    <property type="entry name" value="60KDINNERMP"/>
</dbReference>
<dbReference type="PRINTS" id="PR01900">
    <property type="entry name" value="YIDCPROTEIN"/>
</dbReference>
<organism>
    <name type="scientific">Pectobacterium atrosepticum (strain SCRI 1043 / ATCC BAA-672)</name>
    <name type="common">Erwinia carotovora subsp. atroseptica</name>
    <dbReference type="NCBI Taxonomy" id="218491"/>
    <lineage>
        <taxon>Bacteria</taxon>
        <taxon>Pseudomonadati</taxon>
        <taxon>Pseudomonadota</taxon>
        <taxon>Gammaproteobacteria</taxon>
        <taxon>Enterobacterales</taxon>
        <taxon>Pectobacteriaceae</taxon>
        <taxon>Pectobacterium</taxon>
    </lineage>
</organism>
<evidence type="ECO:0000255" key="1">
    <source>
        <dbReference type="HAMAP-Rule" id="MF_01810"/>
    </source>
</evidence>